<comment type="function">
    <text evidence="1">Part of the outer membrane protein assembly complex, which is involved in assembly and insertion of beta-barrel proteins into the outer membrane.</text>
</comment>
<comment type="subunit">
    <text evidence="1">Part of the Bam complex.</text>
</comment>
<comment type="subcellular location">
    <subcellularLocation>
        <location evidence="1">Cell outer membrane</location>
        <topology evidence="1">Lipid-anchor</topology>
    </subcellularLocation>
</comment>
<comment type="similarity">
    <text evidence="1">Belongs to the BamE family.</text>
</comment>
<comment type="sequence caution" evidence="2">
    <conflict type="frameshift">
        <sequence resource="EMBL-CDS" id="AAA82718"/>
    </conflict>
</comment>
<comment type="sequence caution" evidence="2">
    <conflict type="erroneous initiation">
        <sequence resource="EMBL-CDS" id="ABQ19979"/>
    </conflict>
    <text>Extended N-terminus.</text>
</comment>
<comment type="sequence caution" evidence="2">
    <conflict type="erroneous initiation">
        <sequence resource="EMBL-CDS" id="ACP08881"/>
    </conflict>
    <text>Extended N-terminus.</text>
</comment>
<proteinExistence type="inferred from homology"/>
<reference key="1">
    <citation type="submission" date="1995-10" db="EMBL/GenBank/DDBJ databases">
        <authorList>
            <person name="Kovach M.E."/>
            <person name="Hughes K.J."/>
            <person name="Harkey C.W."/>
            <person name="Everiss K.D."/>
            <person name="Shaffer M.D."/>
            <person name="Peterson K.M."/>
        </authorList>
    </citation>
    <scope>NUCLEOTIDE SEQUENCE [GENOMIC DNA]</scope>
</reference>
<reference key="2">
    <citation type="submission" date="2007-03" db="EMBL/GenBank/DDBJ databases">
        <authorList>
            <person name="Heidelberg J."/>
        </authorList>
    </citation>
    <scope>NUCLEOTIDE SEQUENCE [LARGE SCALE GENOMIC DNA]</scope>
    <source>
        <strain>ATCC 39541 / Classical Ogawa 395 / O395</strain>
    </source>
</reference>
<reference key="3">
    <citation type="journal article" date="2008" name="PLoS ONE">
        <title>A recalibrated molecular clock and independent origins for the cholera pandemic clones.</title>
        <authorList>
            <person name="Feng L."/>
            <person name="Reeves P.R."/>
            <person name="Lan R."/>
            <person name="Ren Y."/>
            <person name="Gao C."/>
            <person name="Zhou Z."/>
            <person name="Ren Y."/>
            <person name="Cheng J."/>
            <person name="Wang W."/>
            <person name="Wang J."/>
            <person name="Qian W."/>
            <person name="Li D."/>
            <person name="Wang L."/>
        </authorList>
    </citation>
    <scope>NUCLEOTIDE SEQUENCE [LARGE SCALE GENOMIC DNA]</scope>
    <source>
        <strain>ATCC 39541 / Classical Ogawa 395 / O395</strain>
    </source>
</reference>
<sequence>MQFTKWFIALPLAVTALSGCSLLERLVYRIDINQGNYVDQQSVDQLKFGMSKDQVRFVLGSPMLVENGYPDTWYYIYHHTQGHNDPVQKNLIVKFNDGGKLVNVAGDFPAGDSFFEGVN</sequence>
<protein>
    <recommendedName>
        <fullName evidence="1">Outer membrane protein assembly factor BamE</fullName>
    </recommendedName>
</protein>
<gene>
    <name evidence="1" type="primary">bamE</name>
    <name type="synonym">smpA</name>
    <name type="ordered locus">VC0395_A0377</name>
    <name type="ordered locus">VC395_0867</name>
</gene>
<keyword id="KW-0998">Cell outer membrane</keyword>
<keyword id="KW-0449">Lipoprotein</keyword>
<keyword id="KW-0472">Membrane</keyword>
<keyword id="KW-0564">Palmitate</keyword>
<keyword id="KW-0732">Signal</keyword>
<evidence type="ECO:0000255" key="1">
    <source>
        <dbReference type="HAMAP-Rule" id="MF_00925"/>
    </source>
</evidence>
<evidence type="ECO:0000305" key="2"/>
<dbReference type="EMBL" id="U39068">
    <property type="protein sequence ID" value="AAA82718.1"/>
    <property type="status" value="ALT_FRAME"/>
    <property type="molecule type" value="Genomic_DNA"/>
</dbReference>
<dbReference type="EMBL" id="CP000627">
    <property type="protein sequence ID" value="ABQ19979.1"/>
    <property type="status" value="ALT_INIT"/>
    <property type="molecule type" value="Genomic_DNA"/>
</dbReference>
<dbReference type="EMBL" id="CP001235">
    <property type="protein sequence ID" value="ACP08881.1"/>
    <property type="status" value="ALT_INIT"/>
    <property type="molecule type" value="Genomic_DNA"/>
</dbReference>
<dbReference type="RefSeq" id="WP_001160907.1">
    <property type="nucleotide sequence ID" value="NZ_JAACZH010000023.1"/>
</dbReference>
<dbReference type="SMR" id="A5F378"/>
<dbReference type="GeneID" id="94014395"/>
<dbReference type="KEGG" id="vco:VC0395_A0377"/>
<dbReference type="KEGG" id="vcr:VC395_0867"/>
<dbReference type="PATRIC" id="fig|345073.21.peg.839"/>
<dbReference type="eggNOG" id="COG2913">
    <property type="taxonomic scope" value="Bacteria"/>
</dbReference>
<dbReference type="HOGENOM" id="CLU_083835_4_0_6"/>
<dbReference type="Proteomes" id="UP000000249">
    <property type="component" value="Chromosome 2"/>
</dbReference>
<dbReference type="GO" id="GO:1990063">
    <property type="term" value="C:Bam protein complex"/>
    <property type="evidence" value="ECO:0007669"/>
    <property type="project" value="TreeGrafter"/>
</dbReference>
<dbReference type="GO" id="GO:0030674">
    <property type="term" value="F:protein-macromolecule adaptor activity"/>
    <property type="evidence" value="ECO:0007669"/>
    <property type="project" value="TreeGrafter"/>
</dbReference>
<dbReference type="GO" id="GO:0043165">
    <property type="term" value="P:Gram-negative-bacterium-type cell outer membrane assembly"/>
    <property type="evidence" value="ECO:0007669"/>
    <property type="project" value="UniProtKB-UniRule"/>
</dbReference>
<dbReference type="GO" id="GO:0051205">
    <property type="term" value="P:protein insertion into membrane"/>
    <property type="evidence" value="ECO:0007669"/>
    <property type="project" value="UniProtKB-UniRule"/>
</dbReference>
<dbReference type="Gene3D" id="3.30.1450.10">
    <property type="match status" value="1"/>
</dbReference>
<dbReference type="HAMAP" id="MF_00925">
    <property type="entry name" value="OM_assembly_BamE"/>
    <property type="match status" value="1"/>
</dbReference>
<dbReference type="InterPro" id="IPR026592">
    <property type="entry name" value="BamE"/>
</dbReference>
<dbReference type="InterPro" id="IPR037873">
    <property type="entry name" value="BamE-like"/>
</dbReference>
<dbReference type="InterPro" id="IPR007450">
    <property type="entry name" value="BamE_dom"/>
</dbReference>
<dbReference type="NCBIfam" id="NF008585">
    <property type="entry name" value="PRK11548.1"/>
    <property type="match status" value="1"/>
</dbReference>
<dbReference type="PANTHER" id="PTHR37482">
    <property type="entry name" value="OUTER MEMBRANE PROTEIN ASSEMBLY FACTOR BAME"/>
    <property type="match status" value="1"/>
</dbReference>
<dbReference type="PANTHER" id="PTHR37482:SF1">
    <property type="entry name" value="OUTER MEMBRANE PROTEIN ASSEMBLY FACTOR BAME"/>
    <property type="match status" value="1"/>
</dbReference>
<dbReference type="Pfam" id="PF04355">
    <property type="entry name" value="BamE"/>
    <property type="match status" value="1"/>
</dbReference>
<dbReference type="PROSITE" id="PS51257">
    <property type="entry name" value="PROKAR_LIPOPROTEIN"/>
    <property type="match status" value="1"/>
</dbReference>
<accession>A5F378</accession>
<accession>C3LYL5</accession>
<accession>P52117</accession>
<accession>Q9KTQ0</accession>
<name>BAME_VIBC3</name>
<organism>
    <name type="scientific">Vibrio cholerae serotype O1 (strain ATCC 39541 / Classical Ogawa 395 / O395)</name>
    <dbReference type="NCBI Taxonomy" id="345073"/>
    <lineage>
        <taxon>Bacteria</taxon>
        <taxon>Pseudomonadati</taxon>
        <taxon>Pseudomonadota</taxon>
        <taxon>Gammaproteobacteria</taxon>
        <taxon>Vibrionales</taxon>
        <taxon>Vibrionaceae</taxon>
        <taxon>Vibrio</taxon>
    </lineage>
</organism>
<feature type="signal peptide" evidence="1">
    <location>
        <begin position="1"/>
        <end position="19"/>
    </location>
</feature>
<feature type="chain" id="PRO_0000324811" description="Outer membrane protein assembly factor BamE">
    <location>
        <begin position="20"/>
        <end position="119"/>
    </location>
</feature>
<feature type="lipid moiety-binding region" description="N-palmitoyl cysteine" evidence="1">
    <location>
        <position position="20"/>
    </location>
</feature>
<feature type="lipid moiety-binding region" description="S-diacylglycerol cysteine" evidence="1">
    <location>
        <position position="20"/>
    </location>
</feature>